<accession>C4ZS07</accession>
<feature type="chain" id="PRO_1000215626" description="UPF0502 protein YceH">
    <location>
        <begin position="1"/>
        <end position="215"/>
    </location>
</feature>
<feature type="modified residue" description="N6-acetyllysine" evidence="1">
    <location>
        <position position="80"/>
    </location>
</feature>
<proteinExistence type="inferred from homology"/>
<reference key="1">
    <citation type="journal article" date="2009" name="J. Bacteriol.">
        <title>Genomic sequencing reveals regulatory mutations and recombinational events in the widely used MC4100 lineage of Escherichia coli K-12.</title>
        <authorList>
            <person name="Ferenci T."/>
            <person name="Zhou Z."/>
            <person name="Betteridge T."/>
            <person name="Ren Y."/>
            <person name="Liu Y."/>
            <person name="Feng L."/>
            <person name="Reeves P.R."/>
            <person name="Wang L."/>
        </authorList>
    </citation>
    <scope>NUCLEOTIDE SEQUENCE [LARGE SCALE GENOMIC DNA]</scope>
    <source>
        <strain>K12 / MC4100 / BW2952</strain>
    </source>
</reference>
<name>YCEH_ECOBW</name>
<evidence type="ECO:0000255" key="1">
    <source>
        <dbReference type="HAMAP-Rule" id="MF_01584"/>
    </source>
</evidence>
<gene>
    <name evidence="1" type="primary">yceH</name>
    <name type="ordered locus">BWG_0915</name>
</gene>
<dbReference type="EMBL" id="CP001396">
    <property type="protein sequence ID" value="ACR62462.1"/>
    <property type="molecule type" value="Genomic_DNA"/>
</dbReference>
<dbReference type="RefSeq" id="WP_000877107.1">
    <property type="nucleotide sequence ID" value="NC_012759.1"/>
</dbReference>
<dbReference type="SMR" id="C4ZS07"/>
<dbReference type="KEGG" id="ebw:BWG_0915"/>
<dbReference type="HOGENOM" id="CLU_057831_2_0_6"/>
<dbReference type="FunFam" id="1.10.10.10:FF:000196">
    <property type="entry name" value="UPF0502 protein YceH"/>
    <property type="match status" value="1"/>
</dbReference>
<dbReference type="FunFam" id="1.10.10.10:FF:000241">
    <property type="entry name" value="UPF0502 protein YceH"/>
    <property type="match status" value="1"/>
</dbReference>
<dbReference type="Gene3D" id="1.10.10.10">
    <property type="entry name" value="Winged helix-like DNA-binding domain superfamily/Winged helix DNA-binding domain"/>
    <property type="match status" value="2"/>
</dbReference>
<dbReference type="HAMAP" id="MF_01584">
    <property type="entry name" value="UPF0502"/>
    <property type="match status" value="1"/>
</dbReference>
<dbReference type="InterPro" id="IPR007432">
    <property type="entry name" value="DUF480"/>
</dbReference>
<dbReference type="InterPro" id="IPR036388">
    <property type="entry name" value="WH-like_DNA-bd_sf"/>
</dbReference>
<dbReference type="InterPro" id="IPR036390">
    <property type="entry name" value="WH_DNA-bd_sf"/>
</dbReference>
<dbReference type="NCBIfam" id="NF008413">
    <property type="entry name" value="PRK11239.1"/>
    <property type="match status" value="1"/>
</dbReference>
<dbReference type="PANTHER" id="PTHR38768">
    <property type="entry name" value="UPF0502 PROTEIN YCEH"/>
    <property type="match status" value="1"/>
</dbReference>
<dbReference type="PANTHER" id="PTHR38768:SF1">
    <property type="entry name" value="UPF0502 PROTEIN YCEH"/>
    <property type="match status" value="1"/>
</dbReference>
<dbReference type="Pfam" id="PF04337">
    <property type="entry name" value="DUF480"/>
    <property type="match status" value="1"/>
</dbReference>
<dbReference type="SUPFAM" id="SSF46785">
    <property type="entry name" value="Winged helix' DNA-binding domain"/>
    <property type="match status" value="2"/>
</dbReference>
<protein>
    <recommendedName>
        <fullName evidence="1">UPF0502 protein YceH</fullName>
    </recommendedName>
</protein>
<comment type="similarity">
    <text evidence="1">Belongs to the UPF0502 family.</text>
</comment>
<organism>
    <name type="scientific">Escherichia coli (strain K12 / MC4100 / BW2952)</name>
    <dbReference type="NCBI Taxonomy" id="595496"/>
    <lineage>
        <taxon>Bacteria</taxon>
        <taxon>Pseudomonadati</taxon>
        <taxon>Pseudomonadota</taxon>
        <taxon>Gammaproteobacteria</taxon>
        <taxon>Enterobacterales</taxon>
        <taxon>Enterobacteriaceae</taxon>
        <taxon>Escherichia</taxon>
    </lineage>
</organism>
<sequence>MKYQLTALEARVIGCLLEKQVTTPEQYPLSVNGVVTACNQKTNREPVMNLSESEVQEQLDNLVKRHYLRTVSGFGNRVTKYEQRFCNSEFGDLKLSAAEVALITTLLLRGAQTPGELRSRAARMYEFSDMAEVESTLEQLANREDGPFVVRLAREPGKRENRYMHLFSGEVEDQPAVTDMSNAVDGDLQARVEALEIEVAELKQRLDSLLAHLGD</sequence>
<keyword id="KW-0007">Acetylation</keyword>